<keyword id="KW-0963">Cytoplasm</keyword>
<keyword id="KW-0489">Methyltransferase</keyword>
<keyword id="KW-0694">RNA-binding</keyword>
<keyword id="KW-0698">rRNA processing</keyword>
<keyword id="KW-0949">S-adenosyl-L-methionine</keyword>
<keyword id="KW-0808">Transferase</keyword>
<comment type="function">
    <text evidence="1">Specifically dimethylates two adjacent adenosines (A1518 and A1519) in the loop of a conserved hairpin near the 3'-end of 16S rRNA in the 30S particle. May play a critical role in biogenesis of 30S subunits.</text>
</comment>
<comment type="catalytic activity">
    <reaction evidence="1">
        <text>adenosine(1518)/adenosine(1519) in 16S rRNA + 4 S-adenosyl-L-methionine = N(6)-dimethyladenosine(1518)/N(6)-dimethyladenosine(1519) in 16S rRNA + 4 S-adenosyl-L-homocysteine + 4 H(+)</text>
        <dbReference type="Rhea" id="RHEA:19609"/>
        <dbReference type="Rhea" id="RHEA-COMP:10232"/>
        <dbReference type="Rhea" id="RHEA-COMP:10233"/>
        <dbReference type="ChEBI" id="CHEBI:15378"/>
        <dbReference type="ChEBI" id="CHEBI:57856"/>
        <dbReference type="ChEBI" id="CHEBI:59789"/>
        <dbReference type="ChEBI" id="CHEBI:74411"/>
        <dbReference type="ChEBI" id="CHEBI:74493"/>
        <dbReference type="EC" id="2.1.1.182"/>
    </reaction>
</comment>
<comment type="subcellular location">
    <subcellularLocation>
        <location evidence="1">Cytoplasm</location>
    </subcellularLocation>
</comment>
<comment type="similarity">
    <text evidence="1">Belongs to the class I-like SAM-binding methyltransferase superfamily. rRNA adenine N(6)-methyltransferase family. RsmA subfamily.</text>
</comment>
<protein>
    <recommendedName>
        <fullName evidence="1">Ribosomal RNA small subunit methyltransferase A</fullName>
        <ecNumber evidence="1">2.1.1.182</ecNumber>
    </recommendedName>
    <alternativeName>
        <fullName evidence="1">16S rRNA (adenine(1518)-N(6)/adenine(1519)-N(6))-dimethyltransferase</fullName>
    </alternativeName>
    <alternativeName>
        <fullName evidence="1">16S rRNA dimethyladenosine transferase</fullName>
    </alternativeName>
    <alternativeName>
        <fullName evidence="1">16S rRNA dimethylase</fullName>
    </alternativeName>
    <alternativeName>
        <fullName evidence="1">S-adenosylmethionine-6-N', N'-adenosyl(rRNA) dimethyltransferase</fullName>
    </alternativeName>
</protein>
<dbReference type="EC" id="2.1.1.182" evidence="1"/>
<dbReference type="EMBL" id="CP001391">
    <property type="protein sequence ID" value="ACN95006.1"/>
    <property type="molecule type" value="Genomic_DNA"/>
</dbReference>
<dbReference type="RefSeq" id="WP_012673076.1">
    <property type="nucleotide sequence ID" value="NZ_MKIF01000124.1"/>
</dbReference>
<dbReference type="SMR" id="C0R5G4"/>
<dbReference type="STRING" id="66084.WRi_001610"/>
<dbReference type="KEGG" id="wri:WRi_001610"/>
<dbReference type="HOGENOM" id="CLU_041220_0_1_5"/>
<dbReference type="Proteomes" id="UP000001293">
    <property type="component" value="Chromosome"/>
</dbReference>
<dbReference type="GO" id="GO:0005829">
    <property type="term" value="C:cytosol"/>
    <property type="evidence" value="ECO:0007669"/>
    <property type="project" value="TreeGrafter"/>
</dbReference>
<dbReference type="GO" id="GO:0052908">
    <property type="term" value="F:16S rRNA (adenine(1518)-N(6)/adenine(1519)-N(6))-dimethyltransferase activity"/>
    <property type="evidence" value="ECO:0007669"/>
    <property type="project" value="UniProtKB-EC"/>
</dbReference>
<dbReference type="GO" id="GO:0003723">
    <property type="term" value="F:RNA binding"/>
    <property type="evidence" value="ECO:0007669"/>
    <property type="project" value="UniProtKB-KW"/>
</dbReference>
<dbReference type="CDD" id="cd02440">
    <property type="entry name" value="AdoMet_MTases"/>
    <property type="match status" value="1"/>
</dbReference>
<dbReference type="FunFam" id="1.10.8.100:FF:000001">
    <property type="entry name" value="Ribosomal RNA small subunit methyltransferase A"/>
    <property type="match status" value="1"/>
</dbReference>
<dbReference type="Gene3D" id="1.10.8.100">
    <property type="entry name" value="Ribosomal RNA adenine dimethylase-like, domain 2"/>
    <property type="match status" value="1"/>
</dbReference>
<dbReference type="Gene3D" id="3.40.50.150">
    <property type="entry name" value="Vaccinia Virus protein VP39"/>
    <property type="match status" value="1"/>
</dbReference>
<dbReference type="HAMAP" id="MF_00607">
    <property type="entry name" value="16SrRNA_methyltr_A"/>
    <property type="match status" value="1"/>
</dbReference>
<dbReference type="InterPro" id="IPR001737">
    <property type="entry name" value="KsgA/Erm"/>
</dbReference>
<dbReference type="InterPro" id="IPR023165">
    <property type="entry name" value="rRNA_Ade_diMease-like_C"/>
</dbReference>
<dbReference type="InterPro" id="IPR020596">
    <property type="entry name" value="rRNA_Ade_Mease_Trfase_CS"/>
</dbReference>
<dbReference type="InterPro" id="IPR020598">
    <property type="entry name" value="rRNA_Ade_methylase_Trfase_N"/>
</dbReference>
<dbReference type="InterPro" id="IPR011530">
    <property type="entry name" value="rRNA_adenine_dimethylase"/>
</dbReference>
<dbReference type="InterPro" id="IPR029063">
    <property type="entry name" value="SAM-dependent_MTases_sf"/>
</dbReference>
<dbReference type="NCBIfam" id="TIGR00755">
    <property type="entry name" value="ksgA"/>
    <property type="match status" value="1"/>
</dbReference>
<dbReference type="PANTHER" id="PTHR11727">
    <property type="entry name" value="DIMETHYLADENOSINE TRANSFERASE"/>
    <property type="match status" value="1"/>
</dbReference>
<dbReference type="PANTHER" id="PTHR11727:SF7">
    <property type="entry name" value="DIMETHYLADENOSINE TRANSFERASE-RELATED"/>
    <property type="match status" value="1"/>
</dbReference>
<dbReference type="Pfam" id="PF00398">
    <property type="entry name" value="RrnaAD"/>
    <property type="match status" value="1"/>
</dbReference>
<dbReference type="SMART" id="SM00650">
    <property type="entry name" value="rADc"/>
    <property type="match status" value="1"/>
</dbReference>
<dbReference type="SUPFAM" id="SSF53335">
    <property type="entry name" value="S-adenosyl-L-methionine-dependent methyltransferases"/>
    <property type="match status" value="1"/>
</dbReference>
<dbReference type="PROSITE" id="PS01131">
    <property type="entry name" value="RRNA_A_DIMETH"/>
    <property type="match status" value="1"/>
</dbReference>
<dbReference type="PROSITE" id="PS51689">
    <property type="entry name" value="SAM_RNA_A_N6_MT"/>
    <property type="match status" value="1"/>
</dbReference>
<evidence type="ECO:0000255" key="1">
    <source>
        <dbReference type="HAMAP-Rule" id="MF_00607"/>
    </source>
</evidence>
<feature type="chain" id="PRO_1000194404" description="Ribosomal RNA small subunit methyltransferase A">
    <location>
        <begin position="1"/>
        <end position="272"/>
    </location>
</feature>
<feature type="binding site" evidence="1">
    <location>
        <position position="15"/>
    </location>
    <ligand>
        <name>S-adenosyl-L-methionine</name>
        <dbReference type="ChEBI" id="CHEBI:59789"/>
    </ligand>
</feature>
<feature type="binding site" evidence="1">
    <location>
        <position position="17"/>
    </location>
    <ligand>
        <name>S-adenosyl-L-methionine</name>
        <dbReference type="ChEBI" id="CHEBI:59789"/>
    </ligand>
</feature>
<feature type="binding site" evidence="1">
    <location>
        <position position="42"/>
    </location>
    <ligand>
        <name>S-adenosyl-L-methionine</name>
        <dbReference type="ChEBI" id="CHEBI:59789"/>
    </ligand>
</feature>
<feature type="binding site" evidence="1">
    <location>
        <position position="64"/>
    </location>
    <ligand>
        <name>S-adenosyl-L-methionine</name>
        <dbReference type="ChEBI" id="CHEBI:59789"/>
    </ligand>
</feature>
<feature type="binding site" evidence="1">
    <location>
        <position position="90"/>
    </location>
    <ligand>
        <name>S-adenosyl-L-methionine</name>
        <dbReference type="ChEBI" id="CHEBI:59789"/>
    </ligand>
</feature>
<feature type="binding site" evidence="1">
    <location>
        <position position="109"/>
    </location>
    <ligand>
        <name>S-adenosyl-L-methionine</name>
        <dbReference type="ChEBI" id="CHEBI:59789"/>
    </ligand>
</feature>
<name>RSMA_WOLWR</name>
<reference key="1">
    <citation type="journal article" date="2009" name="Proc. Natl. Acad. Sci. U.S.A.">
        <title>The mosaic genome structure of the Wolbachia wRi strain infecting Drosophila simulans.</title>
        <authorList>
            <person name="Klasson L."/>
            <person name="Westberg J."/>
            <person name="Sapountzis P."/>
            <person name="Naeslund K."/>
            <person name="Lutnaes Y."/>
            <person name="Darby A.C."/>
            <person name="Veneti Z."/>
            <person name="Chen L."/>
            <person name="Braig H.R."/>
            <person name="Garrett R."/>
            <person name="Bourtzis K."/>
            <person name="Andersson S.G."/>
        </authorList>
    </citation>
    <scope>NUCLEOTIDE SEQUENCE [LARGE SCALE GENOMIC DNA]</scope>
    <source>
        <strain>wRi</strain>
    </source>
</reference>
<proteinExistence type="inferred from homology"/>
<accession>C0R5G4</accession>
<sequence>MKKFLLKPKKSLGQNFILSSEITKKIVALAGSLENFNVIEIGPGYGALTREILVHNPKSLLSIEKDRDLVKHHDQLLNEHQGKYRIIEADALHVTEEELIERPVKVIANLPYNISVVLFLKWLNNIKFFTNLTLMFQKEVADRITARPNSKDYGSLSVLSQLLCDIKKEFDIEPKEFFPRPKIHSSVITVNPLPIPKFAVNLETLTRLTRAVFSQRRKMLRNSLQNITNHTETVLENAKLSGNERPENLTIEQFCLLANNVECLFCKSPIAI</sequence>
<gene>
    <name evidence="1" type="primary">rsmA</name>
    <name evidence="1" type="synonym">ksgA</name>
    <name type="ordered locus">WRi_001610</name>
</gene>
<organism>
    <name type="scientific">Wolbachia sp. subsp. Drosophila simulans (strain wRi)</name>
    <dbReference type="NCBI Taxonomy" id="66084"/>
    <lineage>
        <taxon>Bacteria</taxon>
        <taxon>Pseudomonadati</taxon>
        <taxon>Pseudomonadota</taxon>
        <taxon>Alphaproteobacteria</taxon>
        <taxon>Rickettsiales</taxon>
        <taxon>Anaplasmataceae</taxon>
        <taxon>Wolbachieae</taxon>
        <taxon>Wolbachia</taxon>
    </lineage>
</organism>